<proteinExistence type="inferred from homology"/>
<organism>
    <name type="scientific">Shewanella baltica (strain OS185)</name>
    <dbReference type="NCBI Taxonomy" id="402882"/>
    <lineage>
        <taxon>Bacteria</taxon>
        <taxon>Pseudomonadati</taxon>
        <taxon>Pseudomonadota</taxon>
        <taxon>Gammaproteobacteria</taxon>
        <taxon>Alteromonadales</taxon>
        <taxon>Shewanellaceae</taxon>
        <taxon>Shewanella</taxon>
    </lineage>
</organism>
<protein>
    <recommendedName>
        <fullName evidence="1">Ribosomal RNA large subunit methyltransferase G</fullName>
        <ecNumber evidence="1">2.1.1.174</ecNumber>
    </recommendedName>
    <alternativeName>
        <fullName evidence="1">23S rRNA m2G1835 methyltransferase</fullName>
    </alternativeName>
    <alternativeName>
        <fullName evidence="1">rRNA (guanine-N(2)-)-methyltransferase RlmG</fullName>
    </alternativeName>
</protein>
<dbReference type="EC" id="2.1.1.174" evidence="1"/>
<dbReference type="EMBL" id="CP000753">
    <property type="protein sequence ID" value="ABS09571.1"/>
    <property type="molecule type" value="Genomic_DNA"/>
</dbReference>
<dbReference type="RefSeq" id="WP_012090040.1">
    <property type="nucleotide sequence ID" value="NC_009665.1"/>
</dbReference>
<dbReference type="SMR" id="A6WRY2"/>
<dbReference type="KEGG" id="sbm:Shew185_3444"/>
<dbReference type="HOGENOM" id="CLU_040288_4_0_6"/>
<dbReference type="GO" id="GO:0005737">
    <property type="term" value="C:cytoplasm"/>
    <property type="evidence" value="ECO:0007669"/>
    <property type="project" value="UniProtKB-SubCell"/>
</dbReference>
<dbReference type="GO" id="GO:0052916">
    <property type="term" value="F:23S rRNA (guanine(1835)-N(2))-methyltransferase activity"/>
    <property type="evidence" value="ECO:0007669"/>
    <property type="project" value="UniProtKB-EC"/>
</dbReference>
<dbReference type="GO" id="GO:0003676">
    <property type="term" value="F:nucleic acid binding"/>
    <property type="evidence" value="ECO:0007669"/>
    <property type="project" value="InterPro"/>
</dbReference>
<dbReference type="CDD" id="cd02440">
    <property type="entry name" value="AdoMet_MTases"/>
    <property type="match status" value="1"/>
</dbReference>
<dbReference type="Gene3D" id="3.40.50.150">
    <property type="entry name" value="Vaccinia Virus protein VP39"/>
    <property type="match status" value="2"/>
</dbReference>
<dbReference type="HAMAP" id="MF_01859">
    <property type="entry name" value="23SrRNA_methyltr_G"/>
    <property type="match status" value="1"/>
</dbReference>
<dbReference type="InterPro" id="IPR002052">
    <property type="entry name" value="DNA_methylase_N6_adenine_CS"/>
</dbReference>
<dbReference type="InterPro" id="IPR017237">
    <property type="entry name" value="rRNA_m2G-MeTrfase_RlmG"/>
</dbReference>
<dbReference type="InterPro" id="IPR046977">
    <property type="entry name" value="RsmC/RlmG"/>
</dbReference>
<dbReference type="InterPro" id="IPR029063">
    <property type="entry name" value="SAM-dependent_MTases_sf"/>
</dbReference>
<dbReference type="InterPro" id="IPR007848">
    <property type="entry name" value="Small_mtfrase_dom"/>
</dbReference>
<dbReference type="PANTHER" id="PTHR47816:SF5">
    <property type="entry name" value="RIBOSOMAL RNA LARGE SUBUNIT METHYLTRANSFERASE G"/>
    <property type="match status" value="1"/>
</dbReference>
<dbReference type="PANTHER" id="PTHR47816">
    <property type="entry name" value="RIBOSOMAL RNA SMALL SUBUNIT METHYLTRANSFERASE C"/>
    <property type="match status" value="1"/>
</dbReference>
<dbReference type="Pfam" id="PF05175">
    <property type="entry name" value="MTS"/>
    <property type="match status" value="1"/>
</dbReference>
<dbReference type="PIRSF" id="PIRSF037565">
    <property type="entry name" value="RRNA_m2G_Mtase_RsmD_prd"/>
    <property type="match status" value="1"/>
</dbReference>
<dbReference type="SUPFAM" id="SSF53335">
    <property type="entry name" value="S-adenosyl-L-methionine-dependent methyltransferases"/>
    <property type="match status" value="1"/>
</dbReference>
<sequence>MTTQFSVAGVELELLRYPAQQESNLQAWDAADEHLLKSLIESEQAAVPTAIINDSFGALSCGVSKLNPSWPLCVETDARTSFLGTEQNHGRNQLPLDNLQWFTSRDTLPENLALVLMKLPKNLSYFAHQLTRLSQVLPAGTRILVAAKAKSINGALLDVFGNHLGPASASLAWKNTRVITCVSDGKPRPLAKEVTWAVPEYQLEISNLSNVFAANKLDIGARIMLENLPKGDFKSIVDLGCGNGVLGLRTAQLFPEADIHFIDDSEMAVASAKANWARNQLPADKGHFYWDDCMTHLPEEVQPDLVLCNPPFHQGEAITDHIAWQMFLDARRRLKDGGILHIVGNRHLAYHVKLQRLFKNCTTVASNGKFVILQAQKK</sequence>
<gene>
    <name evidence="1" type="primary">rlmG</name>
    <name type="ordered locus">Shew185_3444</name>
</gene>
<reference key="1">
    <citation type="submission" date="2007-07" db="EMBL/GenBank/DDBJ databases">
        <title>Complete sequence of chromosome of Shewanella baltica OS185.</title>
        <authorList>
            <consortium name="US DOE Joint Genome Institute"/>
            <person name="Copeland A."/>
            <person name="Lucas S."/>
            <person name="Lapidus A."/>
            <person name="Barry K."/>
            <person name="Glavina del Rio T."/>
            <person name="Dalin E."/>
            <person name="Tice H."/>
            <person name="Pitluck S."/>
            <person name="Sims D."/>
            <person name="Brettin T."/>
            <person name="Bruce D."/>
            <person name="Detter J.C."/>
            <person name="Han C."/>
            <person name="Schmutz J."/>
            <person name="Larimer F."/>
            <person name="Land M."/>
            <person name="Hauser L."/>
            <person name="Kyrpides N."/>
            <person name="Mikhailova N."/>
            <person name="Brettar I."/>
            <person name="Rodrigues J."/>
            <person name="Konstantinidis K."/>
            <person name="Tiedje J."/>
            <person name="Richardson P."/>
        </authorList>
    </citation>
    <scope>NUCLEOTIDE SEQUENCE [LARGE SCALE GENOMIC DNA]</scope>
    <source>
        <strain>OS185</strain>
    </source>
</reference>
<name>RLMG_SHEB8</name>
<keyword id="KW-0963">Cytoplasm</keyword>
<keyword id="KW-0489">Methyltransferase</keyword>
<keyword id="KW-0698">rRNA processing</keyword>
<keyword id="KW-0949">S-adenosyl-L-methionine</keyword>
<keyword id="KW-0808">Transferase</keyword>
<evidence type="ECO:0000255" key="1">
    <source>
        <dbReference type="HAMAP-Rule" id="MF_01859"/>
    </source>
</evidence>
<feature type="chain" id="PRO_0000366506" description="Ribosomal RNA large subunit methyltransferase G">
    <location>
        <begin position="1"/>
        <end position="378"/>
    </location>
</feature>
<accession>A6WRY2</accession>
<comment type="function">
    <text evidence="1">Specifically methylates the guanine in position 1835 (m2G1835) of 23S rRNA.</text>
</comment>
<comment type="catalytic activity">
    <reaction evidence="1">
        <text>guanosine(1835) in 23S rRNA + S-adenosyl-L-methionine = N(2)-methylguanosine(1835) in 23S rRNA + S-adenosyl-L-homocysteine + H(+)</text>
        <dbReference type="Rhea" id="RHEA:42744"/>
        <dbReference type="Rhea" id="RHEA-COMP:10217"/>
        <dbReference type="Rhea" id="RHEA-COMP:10218"/>
        <dbReference type="ChEBI" id="CHEBI:15378"/>
        <dbReference type="ChEBI" id="CHEBI:57856"/>
        <dbReference type="ChEBI" id="CHEBI:59789"/>
        <dbReference type="ChEBI" id="CHEBI:74269"/>
        <dbReference type="ChEBI" id="CHEBI:74481"/>
        <dbReference type="EC" id="2.1.1.174"/>
    </reaction>
</comment>
<comment type="subcellular location">
    <subcellularLocation>
        <location evidence="1">Cytoplasm</location>
    </subcellularLocation>
</comment>
<comment type="similarity">
    <text evidence="1">Belongs to the methyltransferase superfamily. RlmG family.</text>
</comment>